<comment type="function">
    <text>Histone-like DNA-binding protein which is capable of wrapping DNA to stabilize it, and thus to prevent its denaturation under extreme environmental conditions.</text>
</comment>
<comment type="similarity">
    <text evidence="1">Belongs to the bacterial histone-like protein family.</text>
</comment>
<comment type="sequence caution" evidence="1">
    <conflict type="erroneous initiation">
        <sequence resource="EMBL-CDS" id="BAA17458"/>
    </conflict>
</comment>
<gene>
    <name type="primary">hup</name>
    <name type="ordered locus">sll1712</name>
</gene>
<reference key="1">
    <citation type="journal article" date="1996" name="DNA Res.">
        <title>Sequence analysis of the genome of the unicellular cyanobacterium Synechocystis sp. strain PCC6803. II. Sequence determination of the entire genome and assignment of potential protein-coding regions.</title>
        <authorList>
            <person name="Kaneko T."/>
            <person name="Sato S."/>
            <person name="Kotani H."/>
            <person name="Tanaka A."/>
            <person name="Asamizu E."/>
            <person name="Nakamura Y."/>
            <person name="Miyajima N."/>
            <person name="Hirosawa M."/>
            <person name="Sugiura M."/>
            <person name="Sasamoto S."/>
            <person name="Kimura T."/>
            <person name="Hosouchi T."/>
            <person name="Matsuno A."/>
            <person name="Muraki A."/>
            <person name="Nakazaki N."/>
            <person name="Naruo K."/>
            <person name="Okumura S."/>
            <person name="Shimpo S."/>
            <person name="Takeuchi C."/>
            <person name="Wada T."/>
            <person name="Watanabe A."/>
            <person name="Yamada M."/>
            <person name="Yasuda M."/>
            <person name="Tabata S."/>
        </authorList>
    </citation>
    <scope>NUCLEOTIDE SEQUENCE [LARGE SCALE GENOMIC DNA]</scope>
    <source>
        <strain>ATCC 27184 / PCC 6803 / Kazusa</strain>
    </source>
</reference>
<organism>
    <name type="scientific">Synechocystis sp. (strain ATCC 27184 / PCC 6803 / Kazusa)</name>
    <dbReference type="NCBI Taxonomy" id="1111708"/>
    <lineage>
        <taxon>Bacteria</taxon>
        <taxon>Bacillati</taxon>
        <taxon>Cyanobacteriota</taxon>
        <taxon>Cyanophyceae</taxon>
        <taxon>Synechococcales</taxon>
        <taxon>Merismopediaceae</taxon>
        <taxon>Synechocystis</taxon>
    </lineage>
</organism>
<evidence type="ECO:0000305" key="1"/>
<proteinExistence type="inferred from homology"/>
<name>DBH_SYNY3</name>
<feature type="chain" id="PRO_0000104988" description="DNA-binding protein HU">
    <location>
        <begin position="1"/>
        <end position="100"/>
    </location>
</feature>
<protein>
    <recommendedName>
        <fullName>DNA-binding protein HU</fullName>
    </recommendedName>
</protein>
<keyword id="KW-0226">DNA condensation</keyword>
<keyword id="KW-0238">DNA-binding</keyword>
<keyword id="KW-1185">Reference proteome</keyword>
<accession>P73418</accession>
<sequence>MNKGELVHAVTDKAKEQLGESITKKEVDAVISAAIDCIMEVVAEGEKVTLVGFGSFEARERKEREGRNPKTGDKMLIPATKVPAFSAGKMFKDKVAPEKK</sequence>
<dbReference type="EMBL" id="BA000022">
    <property type="protein sequence ID" value="BAA17458.1"/>
    <property type="status" value="ALT_INIT"/>
    <property type="molecule type" value="Genomic_DNA"/>
</dbReference>
<dbReference type="PIR" id="S77355">
    <property type="entry name" value="S77355"/>
</dbReference>
<dbReference type="SMR" id="P73418"/>
<dbReference type="FunCoup" id="P73418">
    <property type="interactions" value="381"/>
</dbReference>
<dbReference type="STRING" id="1148.gene:10498322"/>
<dbReference type="PaxDb" id="1148-1652537"/>
<dbReference type="EnsemblBacteria" id="BAA17458">
    <property type="protein sequence ID" value="BAA17458"/>
    <property type="gene ID" value="BAA17458"/>
</dbReference>
<dbReference type="KEGG" id="syn:sll1712"/>
<dbReference type="eggNOG" id="COG0776">
    <property type="taxonomic scope" value="Bacteria"/>
</dbReference>
<dbReference type="InParanoid" id="P73418"/>
<dbReference type="PhylomeDB" id="P73418"/>
<dbReference type="Proteomes" id="UP000001425">
    <property type="component" value="Chromosome"/>
</dbReference>
<dbReference type="GO" id="GO:0005829">
    <property type="term" value="C:cytosol"/>
    <property type="evidence" value="ECO:0000318"/>
    <property type="project" value="GO_Central"/>
</dbReference>
<dbReference type="GO" id="GO:0003677">
    <property type="term" value="F:DNA binding"/>
    <property type="evidence" value="ECO:0000318"/>
    <property type="project" value="GO_Central"/>
</dbReference>
<dbReference type="GO" id="GO:0030527">
    <property type="term" value="F:structural constituent of chromatin"/>
    <property type="evidence" value="ECO:0007669"/>
    <property type="project" value="InterPro"/>
</dbReference>
<dbReference type="GO" id="GO:0030261">
    <property type="term" value="P:chromosome condensation"/>
    <property type="evidence" value="ECO:0007669"/>
    <property type="project" value="UniProtKB-KW"/>
</dbReference>
<dbReference type="CDD" id="cd13831">
    <property type="entry name" value="HU"/>
    <property type="match status" value="1"/>
</dbReference>
<dbReference type="FunFam" id="4.10.520.10:FF:000018">
    <property type="entry name" value="DNA binding protein HU"/>
    <property type="match status" value="1"/>
</dbReference>
<dbReference type="Gene3D" id="4.10.520.10">
    <property type="entry name" value="IHF-like DNA-binding proteins"/>
    <property type="match status" value="1"/>
</dbReference>
<dbReference type="InterPro" id="IPR000119">
    <property type="entry name" value="Hist_DNA-bd"/>
</dbReference>
<dbReference type="InterPro" id="IPR020816">
    <property type="entry name" value="Histone-like_DNA-bd_CS"/>
</dbReference>
<dbReference type="InterPro" id="IPR010992">
    <property type="entry name" value="IHF-like_DNA-bd_dom_sf"/>
</dbReference>
<dbReference type="PANTHER" id="PTHR33175">
    <property type="entry name" value="DNA-BINDING PROTEIN HU"/>
    <property type="match status" value="1"/>
</dbReference>
<dbReference type="PANTHER" id="PTHR33175:SF3">
    <property type="entry name" value="DNA-BINDING PROTEIN HU-BETA"/>
    <property type="match status" value="1"/>
</dbReference>
<dbReference type="Pfam" id="PF00216">
    <property type="entry name" value="Bac_DNA_binding"/>
    <property type="match status" value="1"/>
</dbReference>
<dbReference type="PRINTS" id="PR01727">
    <property type="entry name" value="DNABINDINGHU"/>
</dbReference>
<dbReference type="SMART" id="SM00411">
    <property type="entry name" value="BHL"/>
    <property type="match status" value="1"/>
</dbReference>
<dbReference type="SUPFAM" id="SSF47729">
    <property type="entry name" value="IHF-like DNA-binding proteins"/>
    <property type="match status" value="1"/>
</dbReference>
<dbReference type="PROSITE" id="PS00045">
    <property type="entry name" value="HISTONE_LIKE"/>
    <property type="match status" value="1"/>
</dbReference>